<protein>
    <recommendedName>
        <fullName evidence="1">UPF0154 protein SPD_1662</fullName>
    </recommendedName>
</protein>
<reference key="1">
    <citation type="journal article" date="2007" name="J. Bacteriol.">
        <title>Genome sequence of Avery's virulent serotype 2 strain D39 of Streptococcus pneumoniae and comparison with that of unencapsulated laboratory strain R6.</title>
        <authorList>
            <person name="Lanie J.A."/>
            <person name="Ng W.-L."/>
            <person name="Kazmierczak K.M."/>
            <person name="Andrzejewski T.M."/>
            <person name="Davidsen T.M."/>
            <person name="Wayne K.J."/>
            <person name="Tettelin H."/>
            <person name="Glass J.I."/>
            <person name="Winkler M.E."/>
        </authorList>
    </citation>
    <scope>NUCLEOTIDE SEQUENCE [LARGE SCALE GENOMIC DNA]</scope>
    <source>
        <strain>D39 / NCTC 7466</strain>
    </source>
</reference>
<comment type="subcellular location">
    <subcellularLocation>
        <location evidence="1">Cell membrane</location>
        <topology evidence="1">Single-pass membrane protein</topology>
    </subcellularLocation>
</comment>
<comment type="similarity">
    <text evidence="1">Belongs to the UPF0154 family.</text>
</comment>
<gene>
    <name type="ordered locus">SPD_1662</name>
</gene>
<name>Y1662_STRP2</name>
<organism>
    <name type="scientific">Streptococcus pneumoniae serotype 2 (strain D39 / NCTC 7466)</name>
    <dbReference type="NCBI Taxonomy" id="373153"/>
    <lineage>
        <taxon>Bacteria</taxon>
        <taxon>Bacillati</taxon>
        <taxon>Bacillota</taxon>
        <taxon>Bacilli</taxon>
        <taxon>Lactobacillales</taxon>
        <taxon>Streptococcaceae</taxon>
        <taxon>Streptococcus</taxon>
    </lineage>
</organism>
<feature type="chain" id="PRO_1000005640" description="UPF0154 protein SPD_1662">
    <location>
        <begin position="1"/>
        <end position="82"/>
    </location>
</feature>
<feature type="transmembrane region" description="Helical" evidence="1">
    <location>
        <begin position="5"/>
        <end position="25"/>
    </location>
</feature>
<accession>Q04IS6</accession>
<keyword id="KW-1003">Cell membrane</keyword>
<keyword id="KW-0472">Membrane</keyword>
<keyword id="KW-1185">Reference proteome</keyword>
<keyword id="KW-0812">Transmembrane</keyword>
<keyword id="KW-1133">Transmembrane helix</keyword>
<dbReference type="EMBL" id="CP000410">
    <property type="protein sequence ID" value="ABJ54668.1"/>
    <property type="molecule type" value="Genomic_DNA"/>
</dbReference>
<dbReference type="RefSeq" id="WP_000364990.1">
    <property type="nucleotide sequence ID" value="NZ_JAMLJR010000019.1"/>
</dbReference>
<dbReference type="SMR" id="Q04IS6"/>
<dbReference type="PaxDb" id="373153-SPD_1662"/>
<dbReference type="KEGG" id="spd:SPD_1662"/>
<dbReference type="eggNOG" id="COG3763">
    <property type="taxonomic scope" value="Bacteria"/>
</dbReference>
<dbReference type="HOGENOM" id="CLU_180108_0_0_9"/>
<dbReference type="BioCyc" id="SPNE373153:G1G6V-1796-MONOMER"/>
<dbReference type="Proteomes" id="UP000001452">
    <property type="component" value="Chromosome"/>
</dbReference>
<dbReference type="GO" id="GO:0005886">
    <property type="term" value="C:plasma membrane"/>
    <property type="evidence" value="ECO:0007669"/>
    <property type="project" value="UniProtKB-SubCell"/>
</dbReference>
<dbReference type="HAMAP" id="MF_00363">
    <property type="entry name" value="UPF0154"/>
    <property type="match status" value="1"/>
</dbReference>
<dbReference type="InterPro" id="IPR005359">
    <property type="entry name" value="UPF0154"/>
</dbReference>
<dbReference type="Pfam" id="PF03672">
    <property type="entry name" value="UPF0154"/>
    <property type="match status" value="1"/>
</dbReference>
<proteinExistence type="inferred from homology"/>
<sequence>MDLLLAIVLIVLAFLGGALGGMYLVRKQIEKEFADNPRLNAEAVRTLLSANGQKPSEAKVQQVYHQIIRQQKAALANNKKKK</sequence>
<evidence type="ECO:0000255" key="1">
    <source>
        <dbReference type="HAMAP-Rule" id="MF_00363"/>
    </source>
</evidence>